<evidence type="ECO:0000255" key="1">
    <source>
        <dbReference type="HAMAP-Rule" id="MF_00191"/>
    </source>
</evidence>
<accession>A7MIM0</accession>
<name>ISPH_CROS8</name>
<keyword id="KW-0004">4Fe-4S</keyword>
<keyword id="KW-0408">Iron</keyword>
<keyword id="KW-0411">Iron-sulfur</keyword>
<keyword id="KW-0414">Isoprene biosynthesis</keyword>
<keyword id="KW-0479">Metal-binding</keyword>
<keyword id="KW-0560">Oxidoreductase</keyword>
<keyword id="KW-1185">Reference proteome</keyword>
<proteinExistence type="inferred from homology"/>
<reference key="1">
    <citation type="journal article" date="2010" name="PLoS ONE">
        <title>Genome sequence of Cronobacter sakazakii BAA-894 and comparative genomic hybridization analysis with other Cronobacter species.</title>
        <authorList>
            <person name="Kucerova E."/>
            <person name="Clifton S.W."/>
            <person name="Xia X.Q."/>
            <person name="Long F."/>
            <person name="Porwollik S."/>
            <person name="Fulton L."/>
            <person name="Fronick C."/>
            <person name="Minx P."/>
            <person name="Kyung K."/>
            <person name="Warren W."/>
            <person name="Fulton R."/>
            <person name="Feng D."/>
            <person name="Wollam A."/>
            <person name="Shah N."/>
            <person name="Bhonagiri V."/>
            <person name="Nash W.E."/>
            <person name="Hallsworth-Pepin K."/>
            <person name="Wilson R.K."/>
            <person name="McClelland M."/>
            <person name="Forsythe S.J."/>
        </authorList>
    </citation>
    <scope>NUCLEOTIDE SEQUENCE [LARGE SCALE GENOMIC DNA]</scope>
    <source>
        <strain>ATCC BAA-894</strain>
    </source>
</reference>
<feature type="chain" id="PRO_1000021119" description="4-hydroxy-3-methylbut-2-enyl diphosphate reductase">
    <location>
        <begin position="1"/>
        <end position="316"/>
    </location>
</feature>
<feature type="active site" description="Proton donor" evidence="1">
    <location>
        <position position="126"/>
    </location>
</feature>
<feature type="binding site" evidence="1">
    <location>
        <position position="12"/>
    </location>
    <ligand>
        <name>[4Fe-4S] cluster</name>
        <dbReference type="ChEBI" id="CHEBI:49883"/>
    </ligand>
</feature>
<feature type="binding site" evidence="1">
    <location>
        <position position="41"/>
    </location>
    <ligand>
        <name>(2E)-4-hydroxy-3-methylbut-2-enyl diphosphate</name>
        <dbReference type="ChEBI" id="CHEBI:128753"/>
    </ligand>
</feature>
<feature type="binding site" evidence="1">
    <location>
        <position position="41"/>
    </location>
    <ligand>
        <name>dimethylallyl diphosphate</name>
        <dbReference type="ChEBI" id="CHEBI:57623"/>
    </ligand>
</feature>
<feature type="binding site" evidence="1">
    <location>
        <position position="41"/>
    </location>
    <ligand>
        <name>isopentenyl diphosphate</name>
        <dbReference type="ChEBI" id="CHEBI:128769"/>
    </ligand>
</feature>
<feature type="binding site" evidence="1">
    <location>
        <position position="74"/>
    </location>
    <ligand>
        <name>(2E)-4-hydroxy-3-methylbut-2-enyl diphosphate</name>
        <dbReference type="ChEBI" id="CHEBI:128753"/>
    </ligand>
</feature>
<feature type="binding site" evidence="1">
    <location>
        <position position="74"/>
    </location>
    <ligand>
        <name>dimethylallyl diphosphate</name>
        <dbReference type="ChEBI" id="CHEBI:57623"/>
    </ligand>
</feature>
<feature type="binding site" evidence="1">
    <location>
        <position position="74"/>
    </location>
    <ligand>
        <name>isopentenyl diphosphate</name>
        <dbReference type="ChEBI" id="CHEBI:128769"/>
    </ligand>
</feature>
<feature type="binding site" evidence="1">
    <location>
        <position position="96"/>
    </location>
    <ligand>
        <name>[4Fe-4S] cluster</name>
        <dbReference type="ChEBI" id="CHEBI:49883"/>
    </ligand>
</feature>
<feature type="binding site" evidence="1">
    <location>
        <position position="124"/>
    </location>
    <ligand>
        <name>(2E)-4-hydroxy-3-methylbut-2-enyl diphosphate</name>
        <dbReference type="ChEBI" id="CHEBI:128753"/>
    </ligand>
</feature>
<feature type="binding site" evidence="1">
    <location>
        <position position="124"/>
    </location>
    <ligand>
        <name>dimethylallyl diphosphate</name>
        <dbReference type="ChEBI" id="CHEBI:57623"/>
    </ligand>
</feature>
<feature type="binding site" evidence="1">
    <location>
        <position position="124"/>
    </location>
    <ligand>
        <name>isopentenyl diphosphate</name>
        <dbReference type="ChEBI" id="CHEBI:128769"/>
    </ligand>
</feature>
<feature type="binding site" evidence="1">
    <location>
        <position position="167"/>
    </location>
    <ligand>
        <name>(2E)-4-hydroxy-3-methylbut-2-enyl diphosphate</name>
        <dbReference type="ChEBI" id="CHEBI:128753"/>
    </ligand>
</feature>
<feature type="binding site" evidence="1">
    <location>
        <position position="197"/>
    </location>
    <ligand>
        <name>[4Fe-4S] cluster</name>
        <dbReference type="ChEBI" id="CHEBI:49883"/>
    </ligand>
</feature>
<feature type="binding site" evidence="1">
    <location>
        <position position="225"/>
    </location>
    <ligand>
        <name>(2E)-4-hydroxy-3-methylbut-2-enyl diphosphate</name>
        <dbReference type="ChEBI" id="CHEBI:128753"/>
    </ligand>
</feature>
<feature type="binding site" evidence="1">
    <location>
        <position position="225"/>
    </location>
    <ligand>
        <name>dimethylallyl diphosphate</name>
        <dbReference type="ChEBI" id="CHEBI:57623"/>
    </ligand>
</feature>
<feature type="binding site" evidence="1">
    <location>
        <position position="225"/>
    </location>
    <ligand>
        <name>isopentenyl diphosphate</name>
        <dbReference type="ChEBI" id="CHEBI:128769"/>
    </ligand>
</feature>
<feature type="binding site" evidence="1">
    <location>
        <position position="226"/>
    </location>
    <ligand>
        <name>(2E)-4-hydroxy-3-methylbut-2-enyl diphosphate</name>
        <dbReference type="ChEBI" id="CHEBI:128753"/>
    </ligand>
</feature>
<feature type="binding site" evidence="1">
    <location>
        <position position="226"/>
    </location>
    <ligand>
        <name>dimethylallyl diphosphate</name>
        <dbReference type="ChEBI" id="CHEBI:57623"/>
    </ligand>
</feature>
<feature type="binding site" evidence="1">
    <location>
        <position position="226"/>
    </location>
    <ligand>
        <name>isopentenyl diphosphate</name>
        <dbReference type="ChEBI" id="CHEBI:128769"/>
    </ligand>
</feature>
<feature type="binding site" evidence="1">
    <location>
        <position position="227"/>
    </location>
    <ligand>
        <name>(2E)-4-hydroxy-3-methylbut-2-enyl diphosphate</name>
        <dbReference type="ChEBI" id="CHEBI:128753"/>
    </ligand>
</feature>
<feature type="binding site" evidence="1">
    <location>
        <position position="227"/>
    </location>
    <ligand>
        <name>dimethylallyl diphosphate</name>
        <dbReference type="ChEBI" id="CHEBI:57623"/>
    </ligand>
</feature>
<feature type="binding site" evidence="1">
    <location>
        <position position="227"/>
    </location>
    <ligand>
        <name>isopentenyl diphosphate</name>
        <dbReference type="ChEBI" id="CHEBI:128769"/>
    </ligand>
</feature>
<feature type="binding site" evidence="1">
    <location>
        <position position="269"/>
    </location>
    <ligand>
        <name>(2E)-4-hydroxy-3-methylbut-2-enyl diphosphate</name>
        <dbReference type="ChEBI" id="CHEBI:128753"/>
    </ligand>
</feature>
<feature type="binding site" evidence="1">
    <location>
        <position position="269"/>
    </location>
    <ligand>
        <name>dimethylallyl diphosphate</name>
        <dbReference type="ChEBI" id="CHEBI:57623"/>
    </ligand>
</feature>
<feature type="binding site" evidence="1">
    <location>
        <position position="269"/>
    </location>
    <ligand>
        <name>isopentenyl diphosphate</name>
        <dbReference type="ChEBI" id="CHEBI:128769"/>
    </ligand>
</feature>
<gene>
    <name evidence="1" type="primary">ispH</name>
    <name type="ordered locus">ESA_03309</name>
</gene>
<protein>
    <recommendedName>
        <fullName evidence="1">4-hydroxy-3-methylbut-2-enyl diphosphate reductase</fullName>
        <shortName evidence="1">HMBPP reductase</shortName>
        <ecNumber evidence="1">1.17.7.4</ecNumber>
    </recommendedName>
</protein>
<comment type="function">
    <text evidence="1">Catalyzes the conversion of 1-hydroxy-2-methyl-2-(E)-butenyl 4-diphosphate (HMBPP) into a mixture of isopentenyl diphosphate (IPP) and dimethylallyl diphosphate (DMAPP). Acts in the terminal step of the DOXP/MEP pathway for isoprenoid precursor biosynthesis.</text>
</comment>
<comment type="catalytic activity">
    <reaction evidence="1">
        <text>isopentenyl diphosphate + 2 oxidized [2Fe-2S]-[ferredoxin] + H2O = (2E)-4-hydroxy-3-methylbut-2-enyl diphosphate + 2 reduced [2Fe-2S]-[ferredoxin] + 2 H(+)</text>
        <dbReference type="Rhea" id="RHEA:24488"/>
        <dbReference type="Rhea" id="RHEA-COMP:10000"/>
        <dbReference type="Rhea" id="RHEA-COMP:10001"/>
        <dbReference type="ChEBI" id="CHEBI:15377"/>
        <dbReference type="ChEBI" id="CHEBI:15378"/>
        <dbReference type="ChEBI" id="CHEBI:33737"/>
        <dbReference type="ChEBI" id="CHEBI:33738"/>
        <dbReference type="ChEBI" id="CHEBI:128753"/>
        <dbReference type="ChEBI" id="CHEBI:128769"/>
        <dbReference type="EC" id="1.17.7.4"/>
    </reaction>
</comment>
<comment type="catalytic activity">
    <reaction evidence="1">
        <text>dimethylallyl diphosphate + 2 oxidized [2Fe-2S]-[ferredoxin] + H2O = (2E)-4-hydroxy-3-methylbut-2-enyl diphosphate + 2 reduced [2Fe-2S]-[ferredoxin] + 2 H(+)</text>
        <dbReference type="Rhea" id="RHEA:24825"/>
        <dbReference type="Rhea" id="RHEA-COMP:10000"/>
        <dbReference type="Rhea" id="RHEA-COMP:10001"/>
        <dbReference type="ChEBI" id="CHEBI:15377"/>
        <dbReference type="ChEBI" id="CHEBI:15378"/>
        <dbReference type="ChEBI" id="CHEBI:33737"/>
        <dbReference type="ChEBI" id="CHEBI:33738"/>
        <dbReference type="ChEBI" id="CHEBI:57623"/>
        <dbReference type="ChEBI" id="CHEBI:128753"/>
        <dbReference type="EC" id="1.17.7.4"/>
    </reaction>
</comment>
<comment type="cofactor">
    <cofactor evidence="1">
        <name>[4Fe-4S] cluster</name>
        <dbReference type="ChEBI" id="CHEBI:49883"/>
    </cofactor>
    <text evidence="1">Binds 1 [4Fe-4S] cluster per subunit.</text>
</comment>
<comment type="pathway">
    <text evidence="1">Isoprenoid biosynthesis; dimethylallyl diphosphate biosynthesis; dimethylallyl diphosphate from (2E)-4-hydroxy-3-methylbutenyl diphosphate: step 1/1.</text>
</comment>
<comment type="pathway">
    <text evidence="1">Isoprenoid biosynthesis; isopentenyl diphosphate biosynthesis via DXP pathway; isopentenyl diphosphate from 1-deoxy-D-xylulose 5-phosphate: step 6/6.</text>
</comment>
<comment type="subunit">
    <text evidence="1">Homodimer.</text>
</comment>
<comment type="similarity">
    <text evidence="1">Belongs to the IspH family.</text>
</comment>
<dbReference type="EC" id="1.17.7.4" evidence="1"/>
<dbReference type="EMBL" id="CP000783">
    <property type="protein sequence ID" value="ABU78530.1"/>
    <property type="molecule type" value="Genomic_DNA"/>
</dbReference>
<dbReference type="RefSeq" id="WP_004386254.1">
    <property type="nucleotide sequence ID" value="NC_009778.1"/>
</dbReference>
<dbReference type="SMR" id="A7MIM0"/>
<dbReference type="KEGG" id="esa:ESA_03309"/>
<dbReference type="HOGENOM" id="CLU_027486_1_0_6"/>
<dbReference type="UniPathway" id="UPA00056">
    <property type="reaction ID" value="UER00097"/>
</dbReference>
<dbReference type="UniPathway" id="UPA00059">
    <property type="reaction ID" value="UER00105"/>
</dbReference>
<dbReference type="Proteomes" id="UP000000260">
    <property type="component" value="Chromosome"/>
</dbReference>
<dbReference type="GO" id="GO:0051539">
    <property type="term" value="F:4 iron, 4 sulfur cluster binding"/>
    <property type="evidence" value="ECO:0007669"/>
    <property type="project" value="UniProtKB-UniRule"/>
</dbReference>
<dbReference type="GO" id="GO:0051745">
    <property type="term" value="F:4-hydroxy-3-methylbut-2-enyl diphosphate reductase activity"/>
    <property type="evidence" value="ECO:0007669"/>
    <property type="project" value="UniProtKB-UniRule"/>
</dbReference>
<dbReference type="GO" id="GO:0046872">
    <property type="term" value="F:metal ion binding"/>
    <property type="evidence" value="ECO:0007669"/>
    <property type="project" value="UniProtKB-KW"/>
</dbReference>
<dbReference type="GO" id="GO:0050992">
    <property type="term" value="P:dimethylallyl diphosphate biosynthetic process"/>
    <property type="evidence" value="ECO:0007669"/>
    <property type="project" value="UniProtKB-UniRule"/>
</dbReference>
<dbReference type="GO" id="GO:0019288">
    <property type="term" value="P:isopentenyl diphosphate biosynthetic process, methylerythritol 4-phosphate pathway"/>
    <property type="evidence" value="ECO:0007669"/>
    <property type="project" value="UniProtKB-UniRule"/>
</dbReference>
<dbReference type="GO" id="GO:0016114">
    <property type="term" value="P:terpenoid biosynthetic process"/>
    <property type="evidence" value="ECO:0007669"/>
    <property type="project" value="UniProtKB-UniRule"/>
</dbReference>
<dbReference type="CDD" id="cd13944">
    <property type="entry name" value="lytB_ispH"/>
    <property type="match status" value="1"/>
</dbReference>
<dbReference type="FunFam" id="3.40.50.11270:FF:000001">
    <property type="entry name" value="4-hydroxy-3-methylbut-2-enyl diphosphate reductase"/>
    <property type="match status" value="1"/>
</dbReference>
<dbReference type="Gene3D" id="3.40.50.11270">
    <property type="match status" value="1"/>
</dbReference>
<dbReference type="Gene3D" id="3.40.1010.20">
    <property type="entry name" value="4-hydroxy-3-methylbut-2-enyl diphosphate reductase, catalytic domain"/>
    <property type="match status" value="2"/>
</dbReference>
<dbReference type="HAMAP" id="MF_00191">
    <property type="entry name" value="IspH"/>
    <property type="match status" value="1"/>
</dbReference>
<dbReference type="InterPro" id="IPR003451">
    <property type="entry name" value="LytB/IspH"/>
</dbReference>
<dbReference type="NCBIfam" id="TIGR00216">
    <property type="entry name" value="ispH_lytB"/>
    <property type="match status" value="1"/>
</dbReference>
<dbReference type="NCBIfam" id="NF002188">
    <property type="entry name" value="PRK01045.1-2"/>
    <property type="match status" value="1"/>
</dbReference>
<dbReference type="NCBIfam" id="NF002190">
    <property type="entry name" value="PRK01045.1-4"/>
    <property type="match status" value="1"/>
</dbReference>
<dbReference type="PANTHER" id="PTHR30426">
    <property type="entry name" value="4-HYDROXY-3-METHYLBUT-2-ENYL DIPHOSPHATE REDUCTASE"/>
    <property type="match status" value="1"/>
</dbReference>
<dbReference type="PANTHER" id="PTHR30426:SF0">
    <property type="entry name" value="4-HYDROXY-3-METHYLBUT-2-ENYL DIPHOSPHATE REDUCTASE"/>
    <property type="match status" value="1"/>
</dbReference>
<dbReference type="Pfam" id="PF02401">
    <property type="entry name" value="LYTB"/>
    <property type="match status" value="1"/>
</dbReference>
<sequence length="316" mass="34510">MQILLANPRGFCAGVDRAISIVENALAIYGAPIYVRHEVVHNRYVVDSLRERGAIFIEQISEVPDGAILIFSAHGVSQAVRNEAKSRDLTVFDATCPLVTKVHMEVARSSRRGEEAILIGHAGHPEVEGTMGQYSNPEGGMYLVESPEDVWKITVKDENNLSFMTQTTLSVDDTSEVIDALRSRFPKIVGPRKDDICYATTNRQEAVRALAEQADVVLVVGSKNSSNSNRLAELAQRMGKTAYLIDDANDIQEAWVQNAACVGVTAGASAPDVLVQNVITRLKALGGSDAHELTGREENIVFEVPKELRIDAREVQ</sequence>
<organism>
    <name type="scientific">Cronobacter sakazakii (strain ATCC BAA-894)</name>
    <name type="common">Enterobacter sakazakii</name>
    <dbReference type="NCBI Taxonomy" id="290339"/>
    <lineage>
        <taxon>Bacteria</taxon>
        <taxon>Pseudomonadati</taxon>
        <taxon>Pseudomonadota</taxon>
        <taxon>Gammaproteobacteria</taxon>
        <taxon>Enterobacterales</taxon>
        <taxon>Enterobacteriaceae</taxon>
        <taxon>Cronobacter</taxon>
    </lineage>
</organism>